<sequence>MSKIFDFVKPGVITGDDVQKVFQVAKENNFALPAVNCVGTDSINAVLETAAKVKAPVIVQFSNGGASFIAGKGVKSDVPQGAAILGAISGAHHVHQMAEHYGVPVILHTDHCAKKLLPWIDGLLDAGEKHFAATGKPLFSSHMIDLSEESLQENIEICSKYLERMSKIGMTLEIELGCTGGEEDGVDNSHMDASALYTQPEDVDYAYTELSKISPRFTIAASFGNVHGVYKPGNVVLTPTILRDSQEYVSKKHNLPHNSLNFVFHGGSGSTAQEIKDSVSYGVVKMNIDTDTQWATWEGVLNYYKANEAYLQGQLGNPKGEDQPNKKYYDPRVWLRAGQTSMIARLEKAFQELNAIDVL</sequence>
<comment type="function">
    <text evidence="1">Catalyzes the aldol condensation of dihydroxyacetone phosphate (DHAP or glycerone-phosphate) with glyceraldehyde 3-phosphate (G3P) to form fructose 1,6-bisphosphate (FBP) in gluconeogenesis and the reverse reaction in glycolysis.</text>
</comment>
<comment type="catalytic activity">
    <reaction>
        <text>beta-D-fructose 1,6-bisphosphate = D-glyceraldehyde 3-phosphate + dihydroxyacetone phosphate</text>
        <dbReference type="Rhea" id="RHEA:14729"/>
        <dbReference type="ChEBI" id="CHEBI:32966"/>
        <dbReference type="ChEBI" id="CHEBI:57642"/>
        <dbReference type="ChEBI" id="CHEBI:59776"/>
        <dbReference type="EC" id="4.1.2.13"/>
    </reaction>
</comment>
<comment type="cofactor">
    <cofactor evidence="1">
        <name>Zn(2+)</name>
        <dbReference type="ChEBI" id="CHEBI:29105"/>
    </cofactor>
    <text evidence="1">Binds 2 Zn(2+) ions per subunit. One is catalytic and the other provides a structural contribution.</text>
</comment>
<comment type="pathway">
    <text>Carbohydrate degradation; glycolysis; D-glyceraldehyde 3-phosphate and glycerone phosphate from D-glucose: step 4/4.</text>
</comment>
<comment type="subunit">
    <text evidence="1">Homodimer.</text>
</comment>
<comment type="similarity">
    <text evidence="2">Belongs to the class II fructose-bisphosphate aldolase family.</text>
</comment>
<comment type="sequence caution" evidence="2">
    <conflict type="erroneous initiation">
        <sequence resource="EMBL-CDS" id="AAG58051"/>
    </conflict>
</comment>
<dbReference type="EC" id="4.1.2.13"/>
<dbReference type="EMBL" id="AE005174">
    <property type="protein sequence ID" value="AAG58051.1"/>
    <property type="status" value="ALT_INIT"/>
    <property type="molecule type" value="Genomic_DNA"/>
</dbReference>
<dbReference type="EMBL" id="BA000007">
    <property type="protein sequence ID" value="BAB37219.1"/>
    <property type="molecule type" value="Genomic_DNA"/>
</dbReference>
<dbReference type="PIR" id="D91103">
    <property type="entry name" value="D91103"/>
</dbReference>
<dbReference type="RefSeq" id="NP_311823.1">
    <property type="nucleotide sequence ID" value="NC_002695.1"/>
</dbReference>
<dbReference type="RefSeq" id="WP_000034372.1">
    <property type="nucleotide sequence ID" value="NZ_VOAI01000003.1"/>
</dbReference>
<dbReference type="SMR" id="P0AB72"/>
<dbReference type="STRING" id="155864.Z4263"/>
<dbReference type="GeneID" id="916381"/>
<dbReference type="GeneID" id="93779073"/>
<dbReference type="KEGG" id="ece:Z4263"/>
<dbReference type="KEGG" id="ecs:ECs_3796"/>
<dbReference type="PATRIC" id="fig|386585.9.peg.3962"/>
<dbReference type="eggNOG" id="COG0191">
    <property type="taxonomic scope" value="Bacteria"/>
</dbReference>
<dbReference type="HOGENOM" id="CLU_036923_0_0_6"/>
<dbReference type="OMA" id="HIDFVFH"/>
<dbReference type="UniPathway" id="UPA00109">
    <property type="reaction ID" value="UER00183"/>
</dbReference>
<dbReference type="Proteomes" id="UP000000558">
    <property type="component" value="Chromosome"/>
</dbReference>
<dbReference type="Proteomes" id="UP000002519">
    <property type="component" value="Chromosome"/>
</dbReference>
<dbReference type="GO" id="GO:0005829">
    <property type="term" value="C:cytosol"/>
    <property type="evidence" value="ECO:0007669"/>
    <property type="project" value="TreeGrafter"/>
</dbReference>
<dbReference type="GO" id="GO:0004332">
    <property type="term" value="F:fructose-bisphosphate aldolase activity"/>
    <property type="evidence" value="ECO:0007669"/>
    <property type="project" value="UniProtKB-EC"/>
</dbReference>
<dbReference type="GO" id="GO:0008270">
    <property type="term" value="F:zinc ion binding"/>
    <property type="evidence" value="ECO:0007669"/>
    <property type="project" value="InterPro"/>
</dbReference>
<dbReference type="GO" id="GO:0006094">
    <property type="term" value="P:gluconeogenesis"/>
    <property type="evidence" value="ECO:0007669"/>
    <property type="project" value="TreeGrafter"/>
</dbReference>
<dbReference type="GO" id="GO:0006096">
    <property type="term" value="P:glycolytic process"/>
    <property type="evidence" value="ECO:0007669"/>
    <property type="project" value="UniProtKB-UniPathway"/>
</dbReference>
<dbReference type="CDD" id="cd00946">
    <property type="entry name" value="FBP_aldolase_IIA"/>
    <property type="match status" value="1"/>
</dbReference>
<dbReference type="FunFam" id="3.20.20.70:FF:000013">
    <property type="entry name" value="Class II fructose-bisphosphate aldolase"/>
    <property type="match status" value="1"/>
</dbReference>
<dbReference type="Gene3D" id="3.20.20.70">
    <property type="entry name" value="Aldolase class I"/>
    <property type="match status" value="1"/>
</dbReference>
<dbReference type="InterPro" id="IPR013785">
    <property type="entry name" value="Aldolase_TIM"/>
</dbReference>
<dbReference type="InterPro" id="IPR000771">
    <property type="entry name" value="FBA_II"/>
</dbReference>
<dbReference type="InterPro" id="IPR006411">
    <property type="entry name" value="Fruct_bisP_bact"/>
</dbReference>
<dbReference type="NCBIfam" id="TIGR00167">
    <property type="entry name" value="cbbA"/>
    <property type="match status" value="1"/>
</dbReference>
<dbReference type="NCBIfam" id="TIGR01520">
    <property type="entry name" value="FruBisAldo_II_A"/>
    <property type="match status" value="1"/>
</dbReference>
<dbReference type="NCBIfam" id="NF006628">
    <property type="entry name" value="PRK09197.1"/>
    <property type="match status" value="1"/>
</dbReference>
<dbReference type="PANTHER" id="PTHR30559:SF0">
    <property type="entry name" value="FRUCTOSE-BISPHOSPHATE ALDOLASE"/>
    <property type="match status" value="1"/>
</dbReference>
<dbReference type="PANTHER" id="PTHR30559">
    <property type="entry name" value="FRUCTOSE-BISPHOSPHATE ALDOLASE CLASS 2"/>
    <property type="match status" value="1"/>
</dbReference>
<dbReference type="Pfam" id="PF01116">
    <property type="entry name" value="F_bP_aldolase"/>
    <property type="match status" value="1"/>
</dbReference>
<dbReference type="PIRSF" id="PIRSF001359">
    <property type="entry name" value="F_bP_aldolase_II"/>
    <property type="match status" value="1"/>
</dbReference>
<dbReference type="SUPFAM" id="SSF51569">
    <property type="entry name" value="Aldolase"/>
    <property type="match status" value="1"/>
</dbReference>
<dbReference type="PROSITE" id="PS00602">
    <property type="entry name" value="ALDOLASE_CLASS_II_1"/>
    <property type="match status" value="1"/>
</dbReference>
<dbReference type="PROSITE" id="PS00806">
    <property type="entry name" value="ALDOLASE_CLASS_II_2"/>
    <property type="match status" value="1"/>
</dbReference>
<organism>
    <name type="scientific">Escherichia coli O157:H7</name>
    <dbReference type="NCBI Taxonomy" id="83334"/>
    <lineage>
        <taxon>Bacteria</taxon>
        <taxon>Pseudomonadati</taxon>
        <taxon>Pseudomonadota</taxon>
        <taxon>Gammaproteobacteria</taxon>
        <taxon>Enterobacterales</taxon>
        <taxon>Enterobacteriaceae</taxon>
        <taxon>Escherichia</taxon>
    </lineage>
</organism>
<feature type="initiator methionine" description="Removed" evidence="1">
    <location>
        <position position="1"/>
    </location>
</feature>
<feature type="chain" id="PRO_0000178714" description="Fructose-bisphosphate aldolase class 2">
    <location>
        <begin position="2"/>
        <end position="359"/>
    </location>
</feature>
<feature type="active site" description="Proton donor" evidence="1">
    <location>
        <position position="110"/>
    </location>
</feature>
<feature type="binding site" evidence="1">
    <location>
        <position position="62"/>
    </location>
    <ligand>
        <name>D-glyceraldehyde 3-phosphate</name>
        <dbReference type="ChEBI" id="CHEBI:59776"/>
    </ligand>
</feature>
<feature type="binding site" evidence="1">
    <location>
        <position position="111"/>
    </location>
    <ligand>
        <name>Zn(2+)</name>
        <dbReference type="ChEBI" id="CHEBI:29105"/>
        <label>1</label>
        <note>catalytic</note>
    </ligand>
</feature>
<feature type="binding site" evidence="1">
    <location>
        <position position="145"/>
    </location>
    <ligand>
        <name>Zn(2+)</name>
        <dbReference type="ChEBI" id="CHEBI:29105"/>
        <label>2</label>
    </ligand>
</feature>
<feature type="binding site" evidence="1">
    <location>
        <position position="175"/>
    </location>
    <ligand>
        <name>Zn(2+)</name>
        <dbReference type="ChEBI" id="CHEBI:29105"/>
        <label>2</label>
    </ligand>
</feature>
<feature type="binding site" evidence="1">
    <location>
        <position position="227"/>
    </location>
    <ligand>
        <name>Zn(2+)</name>
        <dbReference type="ChEBI" id="CHEBI:29105"/>
        <label>1</label>
        <note>catalytic</note>
    </ligand>
</feature>
<feature type="binding site" evidence="1">
    <location>
        <position position="228"/>
    </location>
    <ligand>
        <name>dihydroxyacetone phosphate</name>
        <dbReference type="ChEBI" id="CHEBI:57642"/>
    </ligand>
</feature>
<feature type="binding site" evidence="1">
    <location>
        <position position="265"/>
    </location>
    <ligand>
        <name>Zn(2+)</name>
        <dbReference type="ChEBI" id="CHEBI:29105"/>
        <label>1</label>
        <note>catalytic</note>
    </ligand>
</feature>
<feature type="binding site" evidence="1">
    <location>
        <begin position="266"/>
        <end position="268"/>
    </location>
    <ligand>
        <name>dihydroxyacetone phosphate</name>
        <dbReference type="ChEBI" id="CHEBI:57642"/>
    </ligand>
</feature>
<feature type="binding site" evidence="1">
    <location>
        <begin position="287"/>
        <end position="290"/>
    </location>
    <ligand>
        <name>dihydroxyacetone phosphate</name>
        <dbReference type="ChEBI" id="CHEBI:57642"/>
    </ligand>
</feature>
<feature type="modified residue" description="N6-acetyllysine" evidence="1">
    <location>
        <position position="9"/>
    </location>
</feature>
<protein>
    <recommendedName>
        <fullName>Fructose-bisphosphate aldolase class 2</fullName>
        <shortName>FBP aldolase</shortName>
        <shortName>FBPA</shortName>
        <ecNumber>4.1.2.13</ecNumber>
    </recommendedName>
    <alternativeName>
        <fullName>Fructose-1,6-bisphosphate aldolase</fullName>
    </alternativeName>
    <alternativeName>
        <fullName>Fructose-bisphosphate aldolase class II</fullName>
    </alternativeName>
</protein>
<evidence type="ECO:0000250" key="1"/>
<evidence type="ECO:0000305" key="2"/>
<keyword id="KW-0007">Acetylation</keyword>
<keyword id="KW-0324">Glycolysis</keyword>
<keyword id="KW-0456">Lyase</keyword>
<keyword id="KW-0479">Metal-binding</keyword>
<keyword id="KW-1185">Reference proteome</keyword>
<keyword id="KW-0862">Zinc</keyword>
<reference key="1">
    <citation type="journal article" date="2001" name="Nature">
        <title>Genome sequence of enterohaemorrhagic Escherichia coli O157:H7.</title>
        <authorList>
            <person name="Perna N.T."/>
            <person name="Plunkett G. III"/>
            <person name="Burland V."/>
            <person name="Mau B."/>
            <person name="Glasner J.D."/>
            <person name="Rose D.J."/>
            <person name="Mayhew G.F."/>
            <person name="Evans P.S."/>
            <person name="Gregor J."/>
            <person name="Kirkpatrick H.A."/>
            <person name="Posfai G."/>
            <person name="Hackett J."/>
            <person name="Klink S."/>
            <person name="Boutin A."/>
            <person name="Shao Y."/>
            <person name="Miller L."/>
            <person name="Grotbeck E.J."/>
            <person name="Davis N.W."/>
            <person name="Lim A."/>
            <person name="Dimalanta E.T."/>
            <person name="Potamousis K."/>
            <person name="Apodaca J."/>
            <person name="Anantharaman T.S."/>
            <person name="Lin J."/>
            <person name="Yen G."/>
            <person name="Schwartz D.C."/>
            <person name="Welch R.A."/>
            <person name="Blattner F.R."/>
        </authorList>
    </citation>
    <scope>NUCLEOTIDE SEQUENCE [LARGE SCALE GENOMIC DNA]</scope>
    <source>
        <strain>O157:H7 / EDL933 / ATCC 700927 / EHEC</strain>
    </source>
</reference>
<reference key="2">
    <citation type="journal article" date="2001" name="DNA Res.">
        <title>Complete genome sequence of enterohemorrhagic Escherichia coli O157:H7 and genomic comparison with a laboratory strain K-12.</title>
        <authorList>
            <person name="Hayashi T."/>
            <person name="Makino K."/>
            <person name="Ohnishi M."/>
            <person name="Kurokawa K."/>
            <person name="Ishii K."/>
            <person name="Yokoyama K."/>
            <person name="Han C.-G."/>
            <person name="Ohtsubo E."/>
            <person name="Nakayama K."/>
            <person name="Murata T."/>
            <person name="Tanaka M."/>
            <person name="Tobe T."/>
            <person name="Iida T."/>
            <person name="Takami H."/>
            <person name="Honda T."/>
            <person name="Sasakawa C."/>
            <person name="Ogasawara N."/>
            <person name="Yasunaga T."/>
            <person name="Kuhara S."/>
            <person name="Shiba T."/>
            <person name="Hattori M."/>
            <person name="Shinagawa H."/>
        </authorList>
    </citation>
    <scope>NUCLEOTIDE SEQUENCE [LARGE SCALE GENOMIC DNA]</scope>
    <source>
        <strain>O157:H7 / Sakai / RIMD 0509952 / EHEC</strain>
    </source>
</reference>
<proteinExistence type="inferred from homology"/>
<gene>
    <name type="primary">fbaA</name>
    <name type="ordered locus">Z4263</name>
    <name type="ordered locus">ECs3796</name>
</gene>
<name>ALF_ECO57</name>
<accession>P0AB72</accession>
<accession>P11604</accession>